<gene>
    <name evidence="1" type="primary">atpF</name>
    <name type="ordered locus">SBO_3751</name>
</gene>
<accession>Q31UN6</accession>
<feature type="chain" id="PRO_0000368771" description="ATP synthase subunit b">
    <location>
        <begin position="1"/>
        <end position="156"/>
    </location>
</feature>
<feature type="transmembrane region" description="Helical" evidence="1">
    <location>
        <begin position="11"/>
        <end position="31"/>
    </location>
</feature>
<proteinExistence type="inferred from homology"/>
<reference key="1">
    <citation type="journal article" date="2005" name="Nucleic Acids Res.">
        <title>Genome dynamics and diversity of Shigella species, the etiologic agents of bacillary dysentery.</title>
        <authorList>
            <person name="Yang F."/>
            <person name="Yang J."/>
            <person name="Zhang X."/>
            <person name="Chen L."/>
            <person name="Jiang Y."/>
            <person name="Yan Y."/>
            <person name="Tang X."/>
            <person name="Wang J."/>
            <person name="Xiong Z."/>
            <person name="Dong J."/>
            <person name="Xue Y."/>
            <person name="Zhu Y."/>
            <person name="Xu X."/>
            <person name="Sun L."/>
            <person name="Chen S."/>
            <person name="Nie H."/>
            <person name="Peng J."/>
            <person name="Xu J."/>
            <person name="Wang Y."/>
            <person name="Yuan Z."/>
            <person name="Wen Y."/>
            <person name="Yao Z."/>
            <person name="Shen Y."/>
            <person name="Qiang B."/>
            <person name="Hou Y."/>
            <person name="Yu J."/>
            <person name="Jin Q."/>
        </authorList>
    </citation>
    <scope>NUCLEOTIDE SEQUENCE [LARGE SCALE GENOMIC DNA]</scope>
    <source>
        <strain>Sb227</strain>
    </source>
</reference>
<dbReference type="EMBL" id="CP000036">
    <property type="protein sequence ID" value="ABB68222.1"/>
    <property type="molecule type" value="Genomic_DNA"/>
</dbReference>
<dbReference type="RefSeq" id="WP_001052219.1">
    <property type="nucleotide sequence ID" value="NC_007613.1"/>
</dbReference>
<dbReference type="SMR" id="Q31UN6"/>
<dbReference type="GeneID" id="93778231"/>
<dbReference type="KEGG" id="sbo:SBO_3751"/>
<dbReference type="HOGENOM" id="CLU_079215_4_5_6"/>
<dbReference type="Proteomes" id="UP000007067">
    <property type="component" value="Chromosome"/>
</dbReference>
<dbReference type="GO" id="GO:0005886">
    <property type="term" value="C:plasma membrane"/>
    <property type="evidence" value="ECO:0007669"/>
    <property type="project" value="UniProtKB-SubCell"/>
</dbReference>
<dbReference type="GO" id="GO:0045259">
    <property type="term" value="C:proton-transporting ATP synthase complex"/>
    <property type="evidence" value="ECO:0007669"/>
    <property type="project" value="UniProtKB-KW"/>
</dbReference>
<dbReference type="GO" id="GO:0046933">
    <property type="term" value="F:proton-transporting ATP synthase activity, rotational mechanism"/>
    <property type="evidence" value="ECO:0007669"/>
    <property type="project" value="UniProtKB-UniRule"/>
</dbReference>
<dbReference type="GO" id="GO:0046961">
    <property type="term" value="F:proton-transporting ATPase activity, rotational mechanism"/>
    <property type="evidence" value="ECO:0007669"/>
    <property type="project" value="TreeGrafter"/>
</dbReference>
<dbReference type="CDD" id="cd06503">
    <property type="entry name" value="ATP-synt_Fo_b"/>
    <property type="match status" value="1"/>
</dbReference>
<dbReference type="FunFam" id="1.20.5.620:FF:000001">
    <property type="entry name" value="ATP synthase subunit b"/>
    <property type="match status" value="1"/>
</dbReference>
<dbReference type="Gene3D" id="1.20.5.620">
    <property type="entry name" value="F1F0 ATP synthase subunit B, membrane domain"/>
    <property type="match status" value="1"/>
</dbReference>
<dbReference type="HAMAP" id="MF_01398">
    <property type="entry name" value="ATP_synth_b_bprime"/>
    <property type="match status" value="1"/>
</dbReference>
<dbReference type="InterPro" id="IPR028987">
    <property type="entry name" value="ATP_synth_B-like_membr_sf"/>
</dbReference>
<dbReference type="InterPro" id="IPR002146">
    <property type="entry name" value="ATP_synth_b/b'su_bac/chlpt"/>
</dbReference>
<dbReference type="InterPro" id="IPR005864">
    <property type="entry name" value="ATP_synth_F0_bsu_bac"/>
</dbReference>
<dbReference type="InterPro" id="IPR050059">
    <property type="entry name" value="ATP_synthase_B_chain"/>
</dbReference>
<dbReference type="NCBIfam" id="TIGR01144">
    <property type="entry name" value="ATP_synt_b"/>
    <property type="match status" value="1"/>
</dbReference>
<dbReference type="NCBIfam" id="NF004411">
    <property type="entry name" value="PRK05759.1-2"/>
    <property type="match status" value="1"/>
</dbReference>
<dbReference type="NCBIfam" id="NF004413">
    <property type="entry name" value="PRK05759.1-4"/>
    <property type="match status" value="1"/>
</dbReference>
<dbReference type="PANTHER" id="PTHR33445:SF1">
    <property type="entry name" value="ATP SYNTHASE SUBUNIT B"/>
    <property type="match status" value="1"/>
</dbReference>
<dbReference type="PANTHER" id="PTHR33445">
    <property type="entry name" value="ATP SYNTHASE SUBUNIT B', CHLOROPLASTIC"/>
    <property type="match status" value="1"/>
</dbReference>
<dbReference type="Pfam" id="PF00430">
    <property type="entry name" value="ATP-synt_B"/>
    <property type="match status" value="1"/>
</dbReference>
<dbReference type="SUPFAM" id="SSF81573">
    <property type="entry name" value="F1F0 ATP synthase subunit B, membrane domain"/>
    <property type="match status" value="1"/>
</dbReference>
<evidence type="ECO:0000255" key="1">
    <source>
        <dbReference type="HAMAP-Rule" id="MF_01398"/>
    </source>
</evidence>
<keyword id="KW-0066">ATP synthesis</keyword>
<keyword id="KW-0997">Cell inner membrane</keyword>
<keyword id="KW-1003">Cell membrane</keyword>
<keyword id="KW-0138">CF(0)</keyword>
<keyword id="KW-0375">Hydrogen ion transport</keyword>
<keyword id="KW-0406">Ion transport</keyword>
<keyword id="KW-0472">Membrane</keyword>
<keyword id="KW-0812">Transmembrane</keyword>
<keyword id="KW-1133">Transmembrane helix</keyword>
<keyword id="KW-0813">Transport</keyword>
<organism>
    <name type="scientific">Shigella boydii serotype 4 (strain Sb227)</name>
    <dbReference type="NCBI Taxonomy" id="300268"/>
    <lineage>
        <taxon>Bacteria</taxon>
        <taxon>Pseudomonadati</taxon>
        <taxon>Pseudomonadota</taxon>
        <taxon>Gammaproteobacteria</taxon>
        <taxon>Enterobacterales</taxon>
        <taxon>Enterobacteriaceae</taxon>
        <taxon>Shigella</taxon>
    </lineage>
</organism>
<sequence length="156" mass="17264">MNLNATILGQAIAFVLFVLFCMKYVWPPLMAAIEKRQKEIADGLASAERAHKDLDLAKASATDQLKKAKAEAQVIIEQANKRRSQILDEAKAEAEQERTKIVAQAQAEIEAERKRAREELRKQVAILAVAGAEKIIERSVDEAANSDIVDKLVAEL</sequence>
<protein>
    <recommendedName>
        <fullName evidence="1">ATP synthase subunit b</fullName>
    </recommendedName>
    <alternativeName>
        <fullName evidence="1">ATP synthase F(0) sector subunit b</fullName>
    </alternativeName>
    <alternativeName>
        <fullName evidence="1">ATPase subunit I</fullName>
    </alternativeName>
    <alternativeName>
        <fullName evidence="1">F-type ATPase subunit b</fullName>
        <shortName evidence="1">F-ATPase subunit b</shortName>
    </alternativeName>
</protein>
<name>ATPF_SHIBS</name>
<comment type="function">
    <text evidence="1">F(1)F(0) ATP synthase produces ATP from ADP in the presence of a proton or sodium gradient. F-type ATPases consist of two structural domains, F(1) containing the extramembraneous catalytic core and F(0) containing the membrane proton channel, linked together by a central stalk and a peripheral stalk. During catalysis, ATP synthesis in the catalytic domain of F(1) is coupled via a rotary mechanism of the central stalk subunits to proton translocation.</text>
</comment>
<comment type="function">
    <text evidence="1">Component of the F(0) channel, it forms part of the peripheral stalk, linking F(1) to F(0).</text>
</comment>
<comment type="subunit">
    <text evidence="1">F-type ATPases have 2 components, F(1) - the catalytic core - and F(0) - the membrane proton channel. F(1) has five subunits: alpha(3), beta(3), gamma(1), delta(1), epsilon(1). F(0) has three main subunits: a(1), b(2) and c(10-14). The alpha and beta chains form an alternating ring which encloses part of the gamma chain. F(1) is attached to F(0) by a central stalk formed by the gamma and epsilon chains, while a peripheral stalk is formed by the delta and b chains.</text>
</comment>
<comment type="subcellular location">
    <subcellularLocation>
        <location evidence="1">Cell inner membrane</location>
        <topology evidence="1">Single-pass membrane protein</topology>
    </subcellularLocation>
</comment>
<comment type="similarity">
    <text evidence="1">Belongs to the ATPase B chain family.</text>
</comment>